<dbReference type="EMBL" id="AF488554">
    <property type="protein sequence ID" value="AAQ06323.1"/>
    <property type="molecule type" value="mRNA"/>
</dbReference>
<dbReference type="GO" id="GO:0005576">
    <property type="term" value="C:extracellular region"/>
    <property type="evidence" value="ECO:0007669"/>
    <property type="project" value="UniProtKB-SubCell"/>
</dbReference>
<dbReference type="InterPro" id="IPR020128">
    <property type="entry name" value="Secapin"/>
</dbReference>
<dbReference type="Pfam" id="PF17521">
    <property type="entry name" value="Secapin"/>
    <property type="match status" value="1"/>
</dbReference>
<protein>
    <recommendedName>
        <fullName>Secapin</fullName>
    </recommendedName>
</protein>
<comment type="function">
    <text evidence="1">Nontoxic peptide.</text>
</comment>
<comment type="subcellular location">
    <subcellularLocation>
        <location evidence="1">Secreted</location>
    </subcellularLocation>
</comment>
<comment type="tissue specificity">
    <text>Expressed by the venom gland.</text>
</comment>
<comment type="similarity">
    <text evidence="3">Belongs to the secapin family.</text>
</comment>
<proteinExistence type="evidence at transcript level"/>
<evidence type="ECO:0000250" key="1"/>
<evidence type="ECO:0000255" key="2"/>
<evidence type="ECO:0000305" key="3"/>
<accession>Q7YWA9</accession>
<reference key="1">
    <citation type="submission" date="2002-02" db="EMBL/GenBank/DDBJ databases">
        <title>Cloning and sequencing of genes encoding preprosecapin from the venom of wasps and yellowjackets.</title>
        <authorList>
            <person name="Zhang S.F."/>
            <person name="Shi W.J."/>
            <person name="Zhang C.X."/>
            <person name="Cheng J.A."/>
        </authorList>
    </citation>
    <scope>NUCLEOTIDE SEQUENCE [MRNA]</scope>
    <source>
        <tissue>Venom gland</tissue>
    </source>
</reference>
<organism>
    <name type="scientific">Vespula maculifrons</name>
    <name type="common">Eastern yellow jacket</name>
    <name type="synonym">Wasp</name>
    <dbReference type="NCBI Taxonomy" id="7453"/>
    <lineage>
        <taxon>Eukaryota</taxon>
        <taxon>Metazoa</taxon>
        <taxon>Ecdysozoa</taxon>
        <taxon>Arthropoda</taxon>
        <taxon>Hexapoda</taxon>
        <taxon>Insecta</taxon>
        <taxon>Pterygota</taxon>
        <taxon>Neoptera</taxon>
        <taxon>Endopterygota</taxon>
        <taxon>Hymenoptera</taxon>
        <taxon>Apocrita</taxon>
        <taxon>Aculeata</taxon>
        <taxon>Vespoidea</taxon>
        <taxon>Vespidae</taxon>
        <taxon>Vespinae</taxon>
        <taxon>Vespula</taxon>
    </lineage>
</organism>
<feature type="signal peptide" evidence="2">
    <location>
        <begin position="1"/>
        <end position="32"/>
    </location>
</feature>
<feature type="propeptide" id="PRO_0000246018" evidence="1">
    <location>
        <begin position="33"/>
        <end position="52"/>
    </location>
</feature>
<feature type="peptide" id="PRO_0000246019" description="Secapin">
    <location>
        <begin position="53"/>
        <end position="77"/>
    </location>
</feature>
<feature type="disulfide bond" evidence="1">
    <location>
        <begin position="61"/>
        <end position="72"/>
    </location>
</feature>
<keyword id="KW-1015">Disulfide bond</keyword>
<keyword id="KW-0964">Secreted</keyword>
<keyword id="KW-0732">Signal</keyword>
<sequence>MKNYSKNATYLITVLLFSFVTMLLIIPSKCEAVSNDMQPLEARTADLVQQPRYIIDVPPRCPPGSKFVHKRCRVIVP</sequence>
<name>SECP_VESMC</name>